<dbReference type="EC" id="2.1.1.33" evidence="2"/>
<dbReference type="EMBL" id="CP000479">
    <property type="protein sequence ID" value="ABK66693.1"/>
    <property type="molecule type" value="Genomic_DNA"/>
</dbReference>
<dbReference type="SMR" id="A0QME9"/>
<dbReference type="KEGG" id="mav:MAV_4966"/>
<dbReference type="HOGENOM" id="CLU_050910_0_2_11"/>
<dbReference type="UniPathway" id="UPA00989"/>
<dbReference type="Proteomes" id="UP000001574">
    <property type="component" value="Chromosome"/>
</dbReference>
<dbReference type="GO" id="GO:0043527">
    <property type="term" value="C:tRNA methyltransferase complex"/>
    <property type="evidence" value="ECO:0007669"/>
    <property type="project" value="TreeGrafter"/>
</dbReference>
<dbReference type="GO" id="GO:0008176">
    <property type="term" value="F:tRNA (guanine(46)-N7)-methyltransferase activity"/>
    <property type="evidence" value="ECO:0007669"/>
    <property type="project" value="UniProtKB-UniRule"/>
</dbReference>
<dbReference type="CDD" id="cd02440">
    <property type="entry name" value="AdoMet_MTases"/>
    <property type="match status" value="1"/>
</dbReference>
<dbReference type="Gene3D" id="3.40.50.150">
    <property type="entry name" value="Vaccinia Virus protein VP39"/>
    <property type="match status" value="1"/>
</dbReference>
<dbReference type="HAMAP" id="MF_01057">
    <property type="entry name" value="tRNA_methyltr_TrmB"/>
    <property type="match status" value="1"/>
</dbReference>
<dbReference type="InterPro" id="IPR029063">
    <property type="entry name" value="SAM-dependent_MTases_sf"/>
</dbReference>
<dbReference type="InterPro" id="IPR003358">
    <property type="entry name" value="tRNA_(Gua-N-7)_MeTrfase_Trmb"/>
</dbReference>
<dbReference type="InterPro" id="IPR055361">
    <property type="entry name" value="tRNA_methyltr_TrmB_bact"/>
</dbReference>
<dbReference type="NCBIfam" id="TIGR00091">
    <property type="entry name" value="tRNA (guanosine(46)-N7)-methyltransferase TrmB"/>
    <property type="match status" value="1"/>
</dbReference>
<dbReference type="PANTHER" id="PTHR23417">
    <property type="entry name" value="3-DEOXY-D-MANNO-OCTULOSONIC-ACID TRANSFERASE/TRNA GUANINE-N 7 - -METHYLTRANSFERASE"/>
    <property type="match status" value="1"/>
</dbReference>
<dbReference type="PANTHER" id="PTHR23417:SF14">
    <property type="entry name" value="PENTACOTRIPEPTIDE-REPEAT REGION OF PRORP DOMAIN-CONTAINING PROTEIN"/>
    <property type="match status" value="1"/>
</dbReference>
<dbReference type="Pfam" id="PF02390">
    <property type="entry name" value="Methyltransf_4"/>
    <property type="match status" value="1"/>
</dbReference>
<dbReference type="SUPFAM" id="SSF53335">
    <property type="entry name" value="S-adenosyl-L-methionine-dependent methyltransferases"/>
    <property type="match status" value="1"/>
</dbReference>
<dbReference type="PROSITE" id="PS51625">
    <property type="entry name" value="SAM_MT_TRMB"/>
    <property type="match status" value="1"/>
</dbReference>
<comment type="function">
    <text evidence="2">Catalyzes the formation of N(7)-methylguanine at position 46 (m7G46) in tRNA.</text>
</comment>
<comment type="catalytic activity">
    <reaction evidence="2">
        <text>guanosine(46) in tRNA + S-adenosyl-L-methionine = N(7)-methylguanosine(46) in tRNA + S-adenosyl-L-homocysteine</text>
        <dbReference type="Rhea" id="RHEA:42708"/>
        <dbReference type="Rhea" id="RHEA-COMP:10188"/>
        <dbReference type="Rhea" id="RHEA-COMP:10189"/>
        <dbReference type="ChEBI" id="CHEBI:57856"/>
        <dbReference type="ChEBI" id="CHEBI:59789"/>
        <dbReference type="ChEBI" id="CHEBI:74269"/>
        <dbReference type="ChEBI" id="CHEBI:74480"/>
        <dbReference type="EC" id="2.1.1.33"/>
    </reaction>
</comment>
<comment type="pathway">
    <text evidence="2">tRNA modification; N(7)-methylguanine-tRNA biosynthesis.</text>
</comment>
<comment type="similarity">
    <text evidence="2">Belongs to the class I-like SAM-binding methyltransferase superfamily. TrmB family.</text>
</comment>
<accession>A0QME9</accession>
<keyword id="KW-0489">Methyltransferase</keyword>
<keyword id="KW-0949">S-adenosyl-L-methionine</keyword>
<keyword id="KW-0808">Transferase</keyword>
<keyword id="KW-0819">tRNA processing</keyword>
<gene>
    <name evidence="2" type="primary">trmB</name>
    <name type="ordered locus">MAV_4966</name>
</gene>
<feature type="chain" id="PRO_0000288180" description="tRNA (guanine-N(7)-)-methyltransferase">
    <location>
        <begin position="1"/>
        <end position="259"/>
    </location>
</feature>
<feature type="region of interest" description="Disordered" evidence="3">
    <location>
        <begin position="1"/>
        <end position="74"/>
    </location>
</feature>
<feature type="active site" evidence="1">
    <location>
        <position position="166"/>
    </location>
</feature>
<feature type="binding site" evidence="2">
    <location>
        <position position="91"/>
    </location>
    <ligand>
        <name>S-adenosyl-L-methionine</name>
        <dbReference type="ChEBI" id="CHEBI:59789"/>
    </ligand>
</feature>
<feature type="binding site" evidence="2">
    <location>
        <position position="116"/>
    </location>
    <ligand>
        <name>S-adenosyl-L-methionine</name>
        <dbReference type="ChEBI" id="CHEBI:59789"/>
    </ligand>
</feature>
<feature type="binding site" evidence="2">
    <location>
        <position position="143"/>
    </location>
    <ligand>
        <name>S-adenosyl-L-methionine</name>
        <dbReference type="ChEBI" id="CHEBI:59789"/>
    </ligand>
</feature>
<feature type="binding site" evidence="2">
    <location>
        <position position="166"/>
    </location>
    <ligand>
        <name>S-adenosyl-L-methionine</name>
        <dbReference type="ChEBI" id="CHEBI:59789"/>
    </ligand>
</feature>
<feature type="binding site" evidence="2">
    <location>
        <position position="170"/>
    </location>
    <ligand>
        <name>substrate</name>
    </ligand>
</feature>
<feature type="binding site" evidence="2">
    <location>
        <position position="202"/>
    </location>
    <ligand>
        <name>substrate</name>
    </ligand>
</feature>
<feature type="binding site" evidence="2">
    <location>
        <begin position="238"/>
        <end position="241"/>
    </location>
    <ligand>
        <name>substrate</name>
    </ligand>
</feature>
<sequence length="259" mass="28399">MGHHGQMHAQHGVTMPADSPTGQPDRSEQRYFPATAFRTRRSTLSDAQRQTWDRRWPELGLSVGPAEDPDRPGPPLDTDAWFGRKAPVVLEIGCGNGTSTLAMAKQEPGVDVIAVEVYRRGLAQLLCAIDRDNVTNIRLIRGNALDVLQRLIAPASLTGVRVFFPDPWPKARHHKRRFLQPGTVGLIADRLLPGGVLHVATDHAGYAEHIADVGAGEPRLRPADPDSPLPISVARPTTKYETKAQDAGSAVTEFIWLRR</sequence>
<name>TRMB_MYCA1</name>
<reference key="1">
    <citation type="submission" date="2006-10" db="EMBL/GenBank/DDBJ databases">
        <authorList>
            <person name="Fleischmann R.D."/>
            <person name="Dodson R.J."/>
            <person name="Haft D.H."/>
            <person name="Merkel J.S."/>
            <person name="Nelson W.C."/>
            <person name="Fraser C.M."/>
        </authorList>
    </citation>
    <scope>NUCLEOTIDE SEQUENCE [LARGE SCALE GENOMIC DNA]</scope>
    <source>
        <strain>104</strain>
    </source>
</reference>
<proteinExistence type="inferred from homology"/>
<protein>
    <recommendedName>
        <fullName evidence="2">tRNA (guanine-N(7)-)-methyltransferase</fullName>
        <ecNumber evidence="2">2.1.1.33</ecNumber>
    </recommendedName>
    <alternativeName>
        <fullName evidence="2">tRNA (guanine(46)-N(7))-methyltransferase</fullName>
    </alternativeName>
    <alternativeName>
        <fullName evidence="2">tRNA(m7G46)-methyltransferase</fullName>
    </alternativeName>
</protein>
<evidence type="ECO:0000250" key="1"/>
<evidence type="ECO:0000255" key="2">
    <source>
        <dbReference type="HAMAP-Rule" id="MF_01057"/>
    </source>
</evidence>
<evidence type="ECO:0000256" key="3">
    <source>
        <dbReference type="SAM" id="MobiDB-lite"/>
    </source>
</evidence>
<organism>
    <name type="scientific">Mycobacterium avium (strain 104)</name>
    <dbReference type="NCBI Taxonomy" id="243243"/>
    <lineage>
        <taxon>Bacteria</taxon>
        <taxon>Bacillati</taxon>
        <taxon>Actinomycetota</taxon>
        <taxon>Actinomycetes</taxon>
        <taxon>Mycobacteriales</taxon>
        <taxon>Mycobacteriaceae</taxon>
        <taxon>Mycobacterium</taxon>
        <taxon>Mycobacterium avium complex (MAC)</taxon>
    </lineage>
</organism>